<keyword id="KW-0004">4Fe-4S</keyword>
<keyword id="KW-0997">Cell inner membrane</keyword>
<keyword id="KW-1003">Cell membrane</keyword>
<keyword id="KW-0408">Iron</keyword>
<keyword id="KW-0411">Iron-sulfur</keyword>
<keyword id="KW-0472">Membrane</keyword>
<keyword id="KW-0479">Metal-binding</keyword>
<keyword id="KW-0520">NAD</keyword>
<keyword id="KW-0874">Quinone</keyword>
<keyword id="KW-1278">Translocase</keyword>
<keyword id="KW-0813">Transport</keyword>
<keyword id="KW-0830">Ubiquinone</keyword>
<comment type="function">
    <text evidence="1">NDH-1 shuttles electrons from NADH, via FMN and iron-sulfur (Fe-S) centers, to quinones in the respiratory chain. The immediate electron acceptor for the enzyme in this species is believed to be ubiquinone. Couples the redox reaction to proton translocation (for every two electrons transferred, four hydrogen ions are translocated across the cytoplasmic membrane), and thus conserves the redox energy in a proton gradient.</text>
</comment>
<comment type="catalytic activity">
    <reaction evidence="1">
        <text>a quinone + NADH + 5 H(+)(in) = a quinol + NAD(+) + 4 H(+)(out)</text>
        <dbReference type="Rhea" id="RHEA:57888"/>
        <dbReference type="ChEBI" id="CHEBI:15378"/>
        <dbReference type="ChEBI" id="CHEBI:24646"/>
        <dbReference type="ChEBI" id="CHEBI:57540"/>
        <dbReference type="ChEBI" id="CHEBI:57945"/>
        <dbReference type="ChEBI" id="CHEBI:132124"/>
    </reaction>
</comment>
<comment type="cofactor">
    <cofactor evidence="1">
        <name>[4Fe-4S] cluster</name>
        <dbReference type="ChEBI" id="CHEBI:49883"/>
    </cofactor>
    <text evidence="1">Binds 1 [4Fe-4S] cluster.</text>
</comment>
<comment type="subunit">
    <text evidence="1">NDH-1 is composed of 14 different subunits. Subunits NuoB, C, D, E, F, and G constitute the peripheral sector of the complex.</text>
</comment>
<comment type="subcellular location">
    <subcellularLocation>
        <location evidence="1">Cell inner membrane</location>
        <topology evidence="1">Peripheral membrane protein</topology>
        <orientation evidence="1">Cytoplasmic side</orientation>
    </subcellularLocation>
</comment>
<comment type="similarity">
    <text evidence="1">Belongs to the complex I 20 kDa subunit family.</text>
</comment>
<feature type="chain" id="PRO_1000214868" description="NADH-quinone oxidoreductase subunit B">
    <location>
        <begin position="1"/>
        <end position="159"/>
    </location>
</feature>
<feature type="binding site" evidence="1">
    <location>
        <position position="37"/>
    </location>
    <ligand>
        <name>[4Fe-4S] cluster</name>
        <dbReference type="ChEBI" id="CHEBI:49883"/>
    </ligand>
</feature>
<feature type="binding site" evidence="1">
    <location>
        <position position="38"/>
    </location>
    <ligand>
        <name>[4Fe-4S] cluster</name>
        <dbReference type="ChEBI" id="CHEBI:49883"/>
    </ligand>
</feature>
<feature type="binding site" evidence="1">
    <location>
        <position position="102"/>
    </location>
    <ligand>
        <name>[4Fe-4S] cluster</name>
        <dbReference type="ChEBI" id="CHEBI:49883"/>
    </ligand>
</feature>
<feature type="binding site" evidence="1">
    <location>
        <position position="132"/>
    </location>
    <ligand>
        <name>[4Fe-4S] cluster</name>
        <dbReference type="ChEBI" id="CHEBI:49883"/>
    </ligand>
</feature>
<sequence>MAIEGVMKEGFVTTTYDSVVNWAKTGSLWPMTFGLACCAVEMMHAGAARYDIDRFGMLFRPSPRQSDLMIVAGTLCNKMAPALRKVYDQMPEPRWVLSMGSCANGGGYYHYSYSVVRGCDRIVPVDVYVPGCPPTAEALLYGVIQLQQKIRRTNTIARA</sequence>
<name>NUOB_VARPS</name>
<evidence type="ECO:0000255" key="1">
    <source>
        <dbReference type="HAMAP-Rule" id="MF_01356"/>
    </source>
</evidence>
<proteinExistence type="inferred from homology"/>
<reference key="1">
    <citation type="journal article" date="2011" name="J. Bacteriol.">
        <title>Complete genome sequence of the metabolically versatile plant growth-promoting endophyte, Variovorax paradoxus S110.</title>
        <authorList>
            <person name="Han J.I."/>
            <person name="Choi H.K."/>
            <person name="Lee S.W."/>
            <person name="Orwin P.M."/>
            <person name="Kim J."/>
            <person name="Laroe S.L."/>
            <person name="Kim T.G."/>
            <person name="O'Neil J."/>
            <person name="Leadbetter J.R."/>
            <person name="Lee S.Y."/>
            <person name="Hur C.G."/>
            <person name="Spain J.C."/>
            <person name="Ovchinnikova G."/>
            <person name="Goodwin L."/>
            <person name="Han C."/>
        </authorList>
    </citation>
    <scope>NUCLEOTIDE SEQUENCE [LARGE SCALE GENOMIC DNA]</scope>
    <source>
        <strain>S110</strain>
    </source>
</reference>
<protein>
    <recommendedName>
        <fullName evidence="1">NADH-quinone oxidoreductase subunit B</fullName>
        <ecNumber evidence="1">7.1.1.-</ecNumber>
    </recommendedName>
    <alternativeName>
        <fullName evidence="1">NADH dehydrogenase I subunit B</fullName>
    </alternativeName>
    <alternativeName>
        <fullName evidence="1">NDH-1 subunit B</fullName>
    </alternativeName>
</protein>
<organism>
    <name type="scientific">Variovorax paradoxus (strain S110)</name>
    <dbReference type="NCBI Taxonomy" id="543728"/>
    <lineage>
        <taxon>Bacteria</taxon>
        <taxon>Pseudomonadati</taxon>
        <taxon>Pseudomonadota</taxon>
        <taxon>Betaproteobacteria</taxon>
        <taxon>Burkholderiales</taxon>
        <taxon>Comamonadaceae</taxon>
        <taxon>Variovorax</taxon>
    </lineage>
</organism>
<dbReference type="EC" id="7.1.1.-" evidence="1"/>
<dbReference type="EMBL" id="CP001635">
    <property type="protein sequence ID" value="ACS20126.1"/>
    <property type="molecule type" value="Genomic_DNA"/>
</dbReference>
<dbReference type="SMR" id="C5CT19"/>
<dbReference type="STRING" id="543728.Vapar_3509"/>
<dbReference type="KEGG" id="vap:Vapar_3509"/>
<dbReference type="eggNOG" id="COG0377">
    <property type="taxonomic scope" value="Bacteria"/>
</dbReference>
<dbReference type="HOGENOM" id="CLU_055737_7_3_4"/>
<dbReference type="OrthoDB" id="9786737at2"/>
<dbReference type="GO" id="GO:0005886">
    <property type="term" value="C:plasma membrane"/>
    <property type="evidence" value="ECO:0007669"/>
    <property type="project" value="UniProtKB-SubCell"/>
</dbReference>
<dbReference type="GO" id="GO:0045271">
    <property type="term" value="C:respiratory chain complex I"/>
    <property type="evidence" value="ECO:0007669"/>
    <property type="project" value="TreeGrafter"/>
</dbReference>
<dbReference type="GO" id="GO:0051539">
    <property type="term" value="F:4 iron, 4 sulfur cluster binding"/>
    <property type="evidence" value="ECO:0007669"/>
    <property type="project" value="UniProtKB-KW"/>
</dbReference>
<dbReference type="GO" id="GO:0005506">
    <property type="term" value="F:iron ion binding"/>
    <property type="evidence" value="ECO:0007669"/>
    <property type="project" value="UniProtKB-UniRule"/>
</dbReference>
<dbReference type="GO" id="GO:0008137">
    <property type="term" value="F:NADH dehydrogenase (ubiquinone) activity"/>
    <property type="evidence" value="ECO:0007669"/>
    <property type="project" value="InterPro"/>
</dbReference>
<dbReference type="GO" id="GO:0050136">
    <property type="term" value="F:NADH:ubiquinone reductase (non-electrogenic) activity"/>
    <property type="evidence" value="ECO:0007669"/>
    <property type="project" value="UniProtKB-UniRule"/>
</dbReference>
<dbReference type="GO" id="GO:0048038">
    <property type="term" value="F:quinone binding"/>
    <property type="evidence" value="ECO:0007669"/>
    <property type="project" value="UniProtKB-KW"/>
</dbReference>
<dbReference type="GO" id="GO:0009060">
    <property type="term" value="P:aerobic respiration"/>
    <property type="evidence" value="ECO:0007669"/>
    <property type="project" value="TreeGrafter"/>
</dbReference>
<dbReference type="GO" id="GO:0015990">
    <property type="term" value="P:electron transport coupled proton transport"/>
    <property type="evidence" value="ECO:0007669"/>
    <property type="project" value="TreeGrafter"/>
</dbReference>
<dbReference type="FunFam" id="3.40.50.12280:FF:000001">
    <property type="entry name" value="NADH-quinone oxidoreductase subunit B 2"/>
    <property type="match status" value="1"/>
</dbReference>
<dbReference type="Gene3D" id="3.40.50.12280">
    <property type="match status" value="1"/>
</dbReference>
<dbReference type="HAMAP" id="MF_01356">
    <property type="entry name" value="NDH1_NuoB"/>
    <property type="match status" value="1"/>
</dbReference>
<dbReference type="InterPro" id="IPR006137">
    <property type="entry name" value="NADH_UbQ_OxRdtase-like_20kDa"/>
</dbReference>
<dbReference type="InterPro" id="IPR006138">
    <property type="entry name" value="NADH_UQ_OxRdtase_20Kd_su"/>
</dbReference>
<dbReference type="NCBIfam" id="TIGR01957">
    <property type="entry name" value="nuoB_fam"/>
    <property type="match status" value="1"/>
</dbReference>
<dbReference type="NCBIfam" id="NF005012">
    <property type="entry name" value="PRK06411.1"/>
    <property type="match status" value="1"/>
</dbReference>
<dbReference type="PANTHER" id="PTHR11995">
    <property type="entry name" value="NADH DEHYDROGENASE"/>
    <property type="match status" value="1"/>
</dbReference>
<dbReference type="PANTHER" id="PTHR11995:SF14">
    <property type="entry name" value="NADH DEHYDROGENASE [UBIQUINONE] IRON-SULFUR PROTEIN 7, MITOCHONDRIAL"/>
    <property type="match status" value="1"/>
</dbReference>
<dbReference type="Pfam" id="PF01058">
    <property type="entry name" value="Oxidored_q6"/>
    <property type="match status" value="1"/>
</dbReference>
<dbReference type="SUPFAM" id="SSF56770">
    <property type="entry name" value="HydA/Nqo6-like"/>
    <property type="match status" value="1"/>
</dbReference>
<dbReference type="PROSITE" id="PS01150">
    <property type="entry name" value="COMPLEX1_20K"/>
    <property type="match status" value="1"/>
</dbReference>
<accession>C5CT19</accession>
<gene>
    <name evidence="1" type="primary">nuoB</name>
    <name type="ordered locus">Vapar_3509</name>
</gene>